<accession>Q02Z94</accession>
<reference key="1">
    <citation type="journal article" date="2006" name="Proc. Natl. Acad. Sci. U.S.A.">
        <title>Comparative genomics of the lactic acid bacteria.</title>
        <authorList>
            <person name="Makarova K.S."/>
            <person name="Slesarev A."/>
            <person name="Wolf Y.I."/>
            <person name="Sorokin A."/>
            <person name="Mirkin B."/>
            <person name="Koonin E.V."/>
            <person name="Pavlov A."/>
            <person name="Pavlova N."/>
            <person name="Karamychev V."/>
            <person name="Polouchine N."/>
            <person name="Shakhova V."/>
            <person name="Grigoriev I."/>
            <person name="Lou Y."/>
            <person name="Rohksar D."/>
            <person name="Lucas S."/>
            <person name="Huang K."/>
            <person name="Goodstein D.M."/>
            <person name="Hawkins T."/>
            <person name="Plengvidhya V."/>
            <person name="Welker D."/>
            <person name="Hughes J."/>
            <person name="Goh Y."/>
            <person name="Benson A."/>
            <person name="Baldwin K."/>
            <person name="Lee J.-H."/>
            <person name="Diaz-Muniz I."/>
            <person name="Dosti B."/>
            <person name="Smeianov V."/>
            <person name="Wechter W."/>
            <person name="Barabote R."/>
            <person name="Lorca G."/>
            <person name="Altermann E."/>
            <person name="Barrangou R."/>
            <person name="Ganesan B."/>
            <person name="Xie Y."/>
            <person name="Rawsthorne H."/>
            <person name="Tamir D."/>
            <person name="Parker C."/>
            <person name="Breidt F."/>
            <person name="Broadbent J.R."/>
            <person name="Hutkins R."/>
            <person name="O'Sullivan D."/>
            <person name="Steele J."/>
            <person name="Unlu G."/>
            <person name="Saier M.H. Jr."/>
            <person name="Klaenhammer T."/>
            <person name="Richardson P."/>
            <person name="Kozyavkin S."/>
            <person name="Weimer B.C."/>
            <person name="Mills D.A."/>
        </authorList>
    </citation>
    <scope>NUCLEOTIDE SEQUENCE [LARGE SCALE GENOMIC DNA]</scope>
    <source>
        <strain>SK11</strain>
    </source>
</reference>
<keyword id="KW-0030">Aminoacyl-tRNA synthetase</keyword>
<keyword id="KW-0067">ATP-binding</keyword>
<keyword id="KW-0963">Cytoplasm</keyword>
<keyword id="KW-0436">Ligase</keyword>
<keyword id="KW-0547">Nucleotide-binding</keyword>
<keyword id="KW-0648">Protein biosynthesis</keyword>
<gene>
    <name evidence="1" type="primary">glyQ</name>
    <name type="ordered locus">LACR_1196</name>
</gene>
<sequence>MANKKLAFQDIILTLQGFWSKQGANLMQAYDNEVGAGTMSPYTFLRSNGPEPWGAAYVQPSRRPADGRYGENPNRLFQHHQFQVVLKPSPKNIQELYLQSLAALGIDALEHDIRFVEDNWENPSMGCAGIGWEVWIDGQECTQFTYFQQVGGIEVDSVTSEITYGLERIATVIQEVDSVYDLEWGNGVAYGDIFKEPEYEHSKFAFEESNQELLLKLFGEYEQEALDLLDKGLVHPAYDYILKSSHTFNLLDARGAVSVTERAGYMHRVRTMARKVAKTFIEERAKLGFPLLKDEALREKYLGKKGKYTKIVEGEEK</sequence>
<evidence type="ECO:0000255" key="1">
    <source>
        <dbReference type="HAMAP-Rule" id="MF_00254"/>
    </source>
</evidence>
<feature type="chain" id="PRO_1000101204" description="Glycine--tRNA ligase alpha subunit">
    <location>
        <begin position="1"/>
        <end position="317"/>
    </location>
</feature>
<protein>
    <recommendedName>
        <fullName evidence="1">Glycine--tRNA ligase alpha subunit</fullName>
        <ecNumber evidence="1">6.1.1.14</ecNumber>
    </recommendedName>
    <alternativeName>
        <fullName evidence="1">Glycyl-tRNA synthetase alpha subunit</fullName>
        <shortName evidence="1">GlyRS</shortName>
    </alternativeName>
</protein>
<dbReference type="EC" id="6.1.1.14" evidence="1"/>
<dbReference type="EMBL" id="CP000425">
    <property type="protein sequence ID" value="ABJ72728.1"/>
    <property type="molecule type" value="Genomic_DNA"/>
</dbReference>
<dbReference type="RefSeq" id="WP_011676101.1">
    <property type="nucleotide sequence ID" value="NC_008527.1"/>
</dbReference>
<dbReference type="SMR" id="Q02Z94"/>
<dbReference type="GeneID" id="61109341"/>
<dbReference type="KEGG" id="llc:LACR_1196"/>
<dbReference type="HOGENOM" id="CLU_057066_1_0_9"/>
<dbReference type="Proteomes" id="UP000000240">
    <property type="component" value="Chromosome"/>
</dbReference>
<dbReference type="GO" id="GO:0005829">
    <property type="term" value="C:cytosol"/>
    <property type="evidence" value="ECO:0007669"/>
    <property type="project" value="TreeGrafter"/>
</dbReference>
<dbReference type="GO" id="GO:0005524">
    <property type="term" value="F:ATP binding"/>
    <property type="evidence" value="ECO:0007669"/>
    <property type="project" value="UniProtKB-UniRule"/>
</dbReference>
<dbReference type="GO" id="GO:0140096">
    <property type="term" value="F:catalytic activity, acting on a protein"/>
    <property type="evidence" value="ECO:0007669"/>
    <property type="project" value="UniProtKB-ARBA"/>
</dbReference>
<dbReference type="GO" id="GO:0004820">
    <property type="term" value="F:glycine-tRNA ligase activity"/>
    <property type="evidence" value="ECO:0007669"/>
    <property type="project" value="UniProtKB-UniRule"/>
</dbReference>
<dbReference type="GO" id="GO:0016740">
    <property type="term" value="F:transferase activity"/>
    <property type="evidence" value="ECO:0007669"/>
    <property type="project" value="UniProtKB-ARBA"/>
</dbReference>
<dbReference type="GO" id="GO:0006426">
    <property type="term" value="P:glycyl-tRNA aminoacylation"/>
    <property type="evidence" value="ECO:0007669"/>
    <property type="project" value="UniProtKB-UniRule"/>
</dbReference>
<dbReference type="FunFam" id="3.30.930.10:FF:000006">
    <property type="entry name" value="Glycine--tRNA ligase alpha subunit"/>
    <property type="match status" value="1"/>
</dbReference>
<dbReference type="Gene3D" id="3.30.930.10">
    <property type="entry name" value="Bira Bifunctional Protein, Domain 2"/>
    <property type="match status" value="1"/>
</dbReference>
<dbReference type="Gene3D" id="1.20.58.180">
    <property type="entry name" value="Class II aaRS and biotin synthetases, domain 2"/>
    <property type="match status" value="1"/>
</dbReference>
<dbReference type="HAMAP" id="MF_00254">
    <property type="entry name" value="Gly_tRNA_synth_alpha"/>
    <property type="match status" value="1"/>
</dbReference>
<dbReference type="InterPro" id="IPR045864">
    <property type="entry name" value="aa-tRNA-synth_II/BPL/LPL"/>
</dbReference>
<dbReference type="InterPro" id="IPR006194">
    <property type="entry name" value="Gly-tRNA-synth_heterodimer"/>
</dbReference>
<dbReference type="InterPro" id="IPR002310">
    <property type="entry name" value="Gly-tRNA_ligase_asu"/>
</dbReference>
<dbReference type="NCBIfam" id="TIGR00388">
    <property type="entry name" value="glyQ"/>
    <property type="match status" value="1"/>
</dbReference>
<dbReference type="NCBIfam" id="NF006827">
    <property type="entry name" value="PRK09348.1"/>
    <property type="match status" value="1"/>
</dbReference>
<dbReference type="PANTHER" id="PTHR30075:SF2">
    <property type="entry name" value="GLYCINE--TRNA LIGASE, CHLOROPLASTIC_MITOCHONDRIAL 2"/>
    <property type="match status" value="1"/>
</dbReference>
<dbReference type="PANTHER" id="PTHR30075">
    <property type="entry name" value="GLYCYL-TRNA SYNTHETASE"/>
    <property type="match status" value="1"/>
</dbReference>
<dbReference type="Pfam" id="PF02091">
    <property type="entry name" value="tRNA-synt_2e"/>
    <property type="match status" value="1"/>
</dbReference>
<dbReference type="PRINTS" id="PR01044">
    <property type="entry name" value="TRNASYNTHGA"/>
</dbReference>
<dbReference type="SUPFAM" id="SSF55681">
    <property type="entry name" value="Class II aaRS and biotin synthetases"/>
    <property type="match status" value="1"/>
</dbReference>
<dbReference type="PROSITE" id="PS50861">
    <property type="entry name" value="AA_TRNA_LIGASE_II_GLYAB"/>
    <property type="match status" value="1"/>
</dbReference>
<name>SYGA_LACLS</name>
<organism>
    <name type="scientific">Lactococcus lactis subsp. cremoris (strain SK11)</name>
    <dbReference type="NCBI Taxonomy" id="272622"/>
    <lineage>
        <taxon>Bacteria</taxon>
        <taxon>Bacillati</taxon>
        <taxon>Bacillota</taxon>
        <taxon>Bacilli</taxon>
        <taxon>Lactobacillales</taxon>
        <taxon>Streptococcaceae</taxon>
        <taxon>Lactococcus</taxon>
        <taxon>Lactococcus cremoris subsp. cremoris</taxon>
    </lineage>
</organism>
<proteinExistence type="inferred from homology"/>
<comment type="catalytic activity">
    <reaction evidence="1">
        <text>tRNA(Gly) + glycine + ATP = glycyl-tRNA(Gly) + AMP + diphosphate</text>
        <dbReference type="Rhea" id="RHEA:16013"/>
        <dbReference type="Rhea" id="RHEA-COMP:9664"/>
        <dbReference type="Rhea" id="RHEA-COMP:9683"/>
        <dbReference type="ChEBI" id="CHEBI:30616"/>
        <dbReference type="ChEBI" id="CHEBI:33019"/>
        <dbReference type="ChEBI" id="CHEBI:57305"/>
        <dbReference type="ChEBI" id="CHEBI:78442"/>
        <dbReference type="ChEBI" id="CHEBI:78522"/>
        <dbReference type="ChEBI" id="CHEBI:456215"/>
        <dbReference type="EC" id="6.1.1.14"/>
    </reaction>
</comment>
<comment type="subunit">
    <text evidence="1">Tetramer of two alpha and two beta subunits.</text>
</comment>
<comment type="subcellular location">
    <subcellularLocation>
        <location evidence="1">Cytoplasm</location>
    </subcellularLocation>
</comment>
<comment type="similarity">
    <text evidence="1">Belongs to the class-II aminoacyl-tRNA synthetase family.</text>
</comment>